<reference key="1">
    <citation type="journal article" date="2002" name="DNA Res.">
        <title>Complete genome structure of the thermophilic cyanobacterium Thermosynechococcus elongatus BP-1.</title>
        <authorList>
            <person name="Nakamura Y."/>
            <person name="Kaneko T."/>
            <person name="Sato S."/>
            <person name="Ikeuchi M."/>
            <person name="Katoh H."/>
            <person name="Sasamoto S."/>
            <person name="Watanabe A."/>
            <person name="Iriguchi M."/>
            <person name="Kawashima K."/>
            <person name="Kimura T."/>
            <person name="Kishida Y."/>
            <person name="Kiyokawa C."/>
            <person name="Kohara M."/>
            <person name="Matsumoto M."/>
            <person name="Matsuno A."/>
            <person name="Nakazaki N."/>
            <person name="Shimpo S."/>
            <person name="Sugimoto M."/>
            <person name="Takeuchi C."/>
            <person name="Yamada M."/>
            <person name="Tabata S."/>
        </authorList>
    </citation>
    <scope>NUCLEOTIDE SEQUENCE [LARGE SCALE GENOMIC DNA]</scope>
    <source>
        <strain>NIES-2133 / IAM M-273 / BP-1</strain>
    </source>
</reference>
<comment type="function">
    <text evidence="1">Involved in the TCA cycle. Catalyzes the stereospecific interconversion of fumarate to L-malate.</text>
</comment>
<comment type="catalytic activity">
    <reaction evidence="1">
        <text>(S)-malate = fumarate + H2O</text>
        <dbReference type="Rhea" id="RHEA:12460"/>
        <dbReference type="ChEBI" id="CHEBI:15377"/>
        <dbReference type="ChEBI" id="CHEBI:15589"/>
        <dbReference type="ChEBI" id="CHEBI:29806"/>
        <dbReference type="EC" id="4.2.1.2"/>
    </reaction>
</comment>
<comment type="pathway">
    <text evidence="1">Carbohydrate metabolism; tricarboxylic acid cycle; (S)-malate from fumarate: step 1/1.</text>
</comment>
<comment type="subunit">
    <text evidence="1">Homotetramer.</text>
</comment>
<comment type="subcellular location">
    <subcellularLocation>
        <location evidence="1">Cytoplasm</location>
    </subcellularLocation>
</comment>
<comment type="miscellaneous">
    <text evidence="1">There are 2 substrate-binding sites: the catalytic A site, and the non-catalytic B site that may play a role in the transfer of substrate or product between the active site and the solvent. Alternatively, the B site may bind allosteric effectors.</text>
</comment>
<comment type="similarity">
    <text evidence="1">Belongs to the class-II fumarase/aspartase family. Fumarase subfamily.</text>
</comment>
<dbReference type="EC" id="4.2.1.2" evidence="1"/>
<dbReference type="EMBL" id="BA000039">
    <property type="protein sequence ID" value="BAC09086.1"/>
    <property type="molecule type" value="Genomic_DNA"/>
</dbReference>
<dbReference type="RefSeq" id="NP_682324.1">
    <property type="nucleotide sequence ID" value="NC_004113.1"/>
</dbReference>
<dbReference type="RefSeq" id="WP_011057374.1">
    <property type="nucleotide sequence ID" value="NC_004113.1"/>
</dbReference>
<dbReference type="SMR" id="Q8DIP7"/>
<dbReference type="STRING" id="197221.gene:10748134"/>
<dbReference type="EnsemblBacteria" id="BAC09086">
    <property type="protein sequence ID" value="BAC09086"/>
    <property type="gene ID" value="BAC09086"/>
</dbReference>
<dbReference type="KEGG" id="tel:tll1534"/>
<dbReference type="PATRIC" id="fig|197221.4.peg.1609"/>
<dbReference type="eggNOG" id="COG0114">
    <property type="taxonomic scope" value="Bacteria"/>
</dbReference>
<dbReference type="UniPathway" id="UPA00223">
    <property type="reaction ID" value="UER01007"/>
</dbReference>
<dbReference type="Proteomes" id="UP000000440">
    <property type="component" value="Chromosome"/>
</dbReference>
<dbReference type="GO" id="GO:0005737">
    <property type="term" value="C:cytoplasm"/>
    <property type="evidence" value="ECO:0007669"/>
    <property type="project" value="UniProtKB-SubCell"/>
</dbReference>
<dbReference type="GO" id="GO:0004333">
    <property type="term" value="F:fumarate hydratase activity"/>
    <property type="evidence" value="ECO:0007669"/>
    <property type="project" value="UniProtKB-UniRule"/>
</dbReference>
<dbReference type="GO" id="GO:0006106">
    <property type="term" value="P:fumarate metabolic process"/>
    <property type="evidence" value="ECO:0007669"/>
    <property type="project" value="InterPro"/>
</dbReference>
<dbReference type="GO" id="GO:0006108">
    <property type="term" value="P:malate metabolic process"/>
    <property type="evidence" value="ECO:0007669"/>
    <property type="project" value="TreeGrafter"/>
</dbReference>
<dbReference type="GO" id="GO:0006099">
    <property type="term" value="P:tricarboxylic acid cycle"/>
    <property type="evidence" value="ECO:0007669"/>
    <property type="project" value="UniProtKB-UniRule"/>
</dbReference>
<dbReference type="CDD" id="cd01362">
    <property type="entry name" value="Fumarase_classII"/>
    <property type="match status" value="1"/>
</dbReference>
<dbReference type="FunFam" id="1.10.40.30:FF:000002">
    <property type="entry name" value="Fumarate hydratase class II"/>
    <property type="match status" value="1"/>
</dbReference>
<dbReference type="FunFam" id="1.10.275.10:FF:000001">
    <property type="entry name" value="Fumarate hydratase, mitochondrial"/>
    <property type="match status" value="1"/>
</dbReference>
<dbReference type="FunFam" id="1.20.200.10:FF:000001">
    <property type="entry name" value="Fumarate hydratase, mitochondrial"/>
    <property type="match status" value="1"/>
</dbReference>
<dbReference type="Gene3D" id="1.10.40.30">
    <property type="entry name" value="Fumarase/aspartase (C-terminal domain)"/>
    <property type="match status" value="1"/>
</dbReference>
<dbReference type="Gene3D" id="1.20.200.10">
    <property type="entry name" value="Fumarase/aspartase (Central domain)"/>
    <property type="match status" value="1"/>
</dbReference>
<dbReference type="Gene3D" id="1.10.275.10">
    <property type="entry name" value="Fumarase/aspartase (N-terminal domain)"/>
    <property type="match status" value="1"/>
</dbReference>
<dbReference type="HAMAP" id="MF_00743">
    <property type="entry name" value="FumaraseC"/>
    <property type="match status" value="1"/>
</dbReference>
<dbReference type="InterPro" id="IPR005677">
    <property type="entry name" value="Fum_hydII"/>
</dbReference>
<dbReference type="InterPro" id="IPR024083">
    <property type="entry name" value="Fumarase/histidase_N"/>
</dbReference>
<dbReference type="InterPro" id="IPR018951">
    <property type="entry name" value="Fumarase_C_C"/>
</dbReference>
<dbReference type="InterPro" id="IPR020557">
    <property type="entry name" value="Fumarate_lyase_CS"/>
</dbReference>
<dbReference type="InterPro" id="IPR000362">
    <property type="entry name" value="Fumarate_lyase_fam"/>
</dbReference>
<dbReference type="InterPro" id="IPR022761">
    <property type="entry name" value="Fumarate_lyase_N"/>
</dbReference>
<dbReference type="InterPro" id="IPR008948">
    <property type="entry name" value="L-Aspartase-like"/>
</dbReference>
<dbReference type="NCBIfam" id="TIGR00979">
    <property type="entry name" value="fumC_II"/>
    <property type="match status" value="1"/>
</dbReference>
<dbReference type="NCBIfam" id="NF008909">
    <property type="entry name" value="PRK12273.1"/>
    <property type="match status" value="1"/>
</dbReference>
<dbReference type="PANTHER" id="PTHR11444">
    <property type="entry name" value="ASPARTATEAMMONIA/ARGININOSUCCINATE/ADENYLOSUCCINATE LYASE"/>
    <property type="match status" value="1"/>
</dbReference>
<dbReference type="PANTHER" id="PTHR11444:SF1">
    <property type="entry name" value="FUMARATE HYDRATASE, MITOCHONDRIAL"/>
    <property type="match status" value="1"/>
</dbReference>
<dbReference type="Pfam" id="PF10415">
    <property type="entry name" value="FumaraseC_C"/>
    <property type="match status" value="1"/>
</dbReference>
<dbReference type="Pfam" id="PF00206">
    <property type="entry name" value="Lyase_1"/>
    <property type="match status" value="1"/>
</dbReference>
<dbReference type="PRINTS" id="PR00149">
    <property type="entry name" value="FUMRATELYASE"/>
</dbReference>
<dbReference type="SUPFAM" id="SSF48557">
    <property type="entry name" value="L-aspartase-like"/>
    <property type="match status" value="1"/>
</dbReference>
<dbReference type="PROSITE" id="PS00163">
    <property type="entry name" value="FUMARATE_LYASES"/>
    <property type="match status" value="1"/>
</dbReference>
<evidence type="ECO:0000255" key="1">
    <source>
        <dbReference type="HAMAP-Rule" id="MF_00743"/>
    </source>
</evidence>
<protein>
    <recommendedName>
        <fullName evidence="1">Fumarate hydratase class II</fullName>
        <shortName evidence="1">Fumarase C</shortName>
        <ecNumber evidence="1">4.2.1.2</ecNumber>
    </recommendedName>
    <alternativeName>
        <fullName evidence="1">Aerobic fumarase</fullName>
    </alternativeName>
    <alternativeName>
        <fullName evidence="1">Iron-independent fumarase</fullName>
    </alternativeName>
</protein>
<organism>
    <name type="scientific">Thermosynechococcus vestitus (strain NIES-2133 / IAM M-273 / BP-1)</name>
    <dbReference type="NCBI Taxonomy" id="197221"/>
    <lineage>
        <taxon>Bacteria</taxon>
        <taxon>Bacillati</taxon>
        <taxon>Cyanobacteriota</taxon>
        <taxon>Cyanophyceae</taxon>
        <taxon>Acaryochloridales</taxon>
        <taxon>Thermosynechococcaceae</taxon>
        <taxon>Thermosynechococcus</taxon>
    </lineage>
</organism>
<accession>Q8DIP7</accession>
<keyword id="KW-0963">Cytoplasm</keyword>
<keyword id="KW-0456">Lyase</keyword>
<keyword id="KW-1185">Reference proteome</keyword>
<keyword id="KW-0816">Tricarboxylic acid cycle</keyword>
<sequence>MTTDTRLEYDSLGAVEVPADCYWGAQTARSLKHFAIGSQRMPLAVIHAMARLKKAAAIANRDLGVLDPEKAKWIIQAADEVIAGQWDDQFPLAIWQTGSGTQTNMNVNEVIANRAIELAGGVKGSKSPIHPNDHVNCSQSSNDTFPTAMHVATVLALQERLLPTLRHLLTVLQEKAAAFAEIIKIGRTHLMDAVPLTLGQEFSGYASQIAAAQAHIEYALQHLYPLAIGATAVGTGLNAPAGFGDRVAAELAQMTGYPFRKAENPFAALAAHDPLVMLSGALKTLAAALMKIANDIRWLGSGPRCGLGELRLPANEPGSSIMPGKVNPTQCEALTMVCVQVMGNDAAVGIAGSQGNFELNVYKPLIIYNVLQSIALLSDAAQSFTDHCLVGVEPNRQQIQAYVERSLMLVTALNPHIGYDKAAAVAKKAYSEGKTLKEAAVELGYLTAEEFDRWVRLELMLGEKGTS</sequence>
<proteinExistence type="inferred from homology"/>
<gene>
    <name evidence="1" type="primary">fumC</name>
    <name type="ordered locus">tll1534</name>
</gene>
<feature type="chain" id="PRO_0000161323" description="Fumarate hydratase class II">
    <location>
        <begin position="1"/>
        <end position="467"/>
    </location>
</feature>
<feature type="active site" description="Proton donor/acceptor" evidence="1">
    <location>
        <position position="189"/>
    </location>
</feature>
<feature type="active site" evidence="1">
    <location>
        <position position="319"/>
    </location>
</feature>
<feature type="binding site" evidence="1">
    <location>
        <begin position="99"/>
        <end position="101"/>
    </location>
    <ligand>
        <name>substrate</name>
    </ligand>
</feature>
<feature type="binding site" description="in site B" evidence="1">
    <location>
        <begin position="130"/>
        <end position="133"/>
    </location>
    <ligand>
        <name>substrate</name>
    </ligand>
</feature>
<feature type="binding site" evidence="1">
    <location>
        <begin position="140"/>
        <end position="142"/>
    </location>
    <ligand>
        <name>substrate</name>
    </ligand>
</feature>
<feature type="binding site" evidence="1">
    <location>
        <position position="188"/>
    </location>
    <ligand>
        <name>substrate</name>
    </ligand>
</feature>
<feature type="binding site" evidence="1">
    <location>
        <position position="320"/>
    </location>
    <ligand>
        <name>substrate</name>
    </ligand>
</feature>
<feature type="binding site" evidence="1">
    <location>
        <begin position="325"/>
        <end position="327"/>
    </location>
    <ligand>
        <name>substrate</name>
    </ligand>
</feature>
<feature type="site" description="Important for catalytic activity" evidence="1">
    <location>
        <position position="332"/>
    </location>
</feature>
<name>FUMC_THEVB</name>